<organism>
    <name type="scientific">Nitratidesulfovibrio vulgaris (strain DP4)</name>
    <name type="common">Desulfovibrio vulgaris</name>
    <dbReference type="NCBI Taxonomy" id="391774"/>
    <lineage>
        <taxon>Bacteria</taxon>
        <taxon>Pseudomonadati</taxon>
        <taxon>Thermodesulfobacteriota</taxon>
        <taxon>Desulfovibrionia</taxon>
        <taxon>Desulfovibrionales</taxon>
        <taxon>Desulfovibrionaceae</taxon>
        <taxon>Nitratidesulfovibrio</taxon>
    </lineage>
</organism>
<feature type="chain" id="PRO_0000319158" description="Formate-dependent phosphoribosylglycinamide formyltransferase">
    <location>
        <begin position="1"/>
        <end position="393"/>
    </location>
</feature>
<feature type="domain" description="ATP-grasp" evidence="1">
    <location>
        <begin position="119"/>
        <end position="308"/>
    </location>
</feature>
<feature type="binding site" evidence="1">
    <location>
        <begin position="22"/>
        <end position="23"/>
    </location>
    <ligand>
        <name>N(1)-(5-phospho-beta-D-ribosyl)glycinamide</name>
        <dbReference type="ChEBI" id="CHEBI:143788"/>
    </ligand>
</feature>
<feature type="binding site" evidence="1">
    <location>
        <position position="82"/>
    </location>
    <ligand>
        <name>N(1)-(5-phospho-beta-D-ribosyl)glycinamide</name>
        <dbReference type="ChEBI" id="CHEBI:143788"/>
    </ligand>
</feature>
<feature type="binding site" evidence="1">
    <location>
        <position position="114"/>
    </location>
    <ligand>
        <name>ATP</name>
        <dbReference type="ChEBI" id="CHEBI:30616"/>
    </ligand>
</feature>
<feature type="binding site" evidence="1">
    <location>
        <position position="155"/>
    </location>
    <ligand>
        <name>ATP</name>
        <dbReference type="ChEBI" id="CHEBI:30616"/>
    </ligand>
</feature>
<feature type="binding site" evidence="1">
    <location>
        <begin position="160"/>
        <end position="165"/>
    </location>
    <ligand>
        <name>ATP</name>
        <dbReference type="ChEBI" id="CHEBI:30616"/>
    </ligand>
</feature>
<feature type="binding site" evidence="1">
    <location>
        <begin position="195"/>
        <end position="198"/>
    </location>
    <ligand>
        <name>ATP</name>
        <dbReference type="ChEBI" id="CHEBI:30616"/>
    </ligand>
</feature>
<feature type="binding site" evidence="1">
    <location>
        <position position="203"/>
    </location>
    <ligand>
        <name>ATP</name>
        <dbReference type="ChEBI" id="CHEBI:30616"/>
    </ligand>
</feature>
<feature type="binding site" evidence="1">
    <location>
        <position position="267"/>
    </location>
    <ligand>
        <name>Mg(2+)</name>
        <dbReference type="ChEBI" id="CHEBI:18420"/>
    </ligand>
</feature>
<feature type="binding site" evidence="1">
    <location>
        <position position="279"/>
    </location>
    <ligand>
        <name>Mg(2+)</name>
        <dbReference type="ChEBI" id="CHEBI:18420"/>
    </ligand>
</feature>
<feature type="binding site" evidence="1">
    <location>
        <position position="286"/>
    </location>
    <ligand>
        <name>N(1)-(5-phospho-beta-D-ribosyl)glycinamide</name>
        <dbReference type="ChEBI" id="CHEBI:143788"/>
    </ligand>
</feature>
<feature type="binding site" evidence="1">
    <location>
        <position position="356"/>
    </location>
    <ligand>
        <name>N(1)-(5-phospho-beta-D-ribosyl)glycinamide</name>
        <dbReference type="ChEBI" id="CHEBI:143788"/>
    </ligand>
</feature>
<feature type="binding site" evidence="1">
    <location>
        <begin position="363"/>
        <end position="364"/>
    </location>
    <ligand>
        <name>N(1)-(5-phospho-beta-D-ribosyl)glycinamide</name>
        <dbReference type="ChEBI" id="CHEBI:143788"/>
    </ligand>
</feature>
<name>PURT_NITV4</name>
<proteinExistence type="inferred from homology"/>
<gene>
    <name evidence="1" type="primary">purT</name>
    <name type="ordered locus">Dvul_2246</name>
</gene>
<accession>A1VFP6</accession>
<protein>
    <recommendedName>
        <fullName evidence="1">Formate-dependent phosphoribosylglycinamide formyltransferase</fullName>
        <ecNumber evidence="1">6.3.1.21</ecNumber>
    </recommendedName>
    <alternativeName>
        <fullName evidence="1">5'-phosphoribosylglycinamide transformylase 2</fullName>
    </alternativeName>
    <alternativeName>
        <fullName evidence="1">Formate-dependent GAR transformylase</fullName>
    </alternativeName>
    <alternativeName>
        <fullName evidence="1">GAR transformylase 2</fullName>
        <shortName evidence="1">GART 2</shortName>
    </alternativeName>
    <alternativeName>
        <fullName evidence="1">Non-folate glycinamide ribonucleotide transformylase</fullName>
    </alternativeName>
    <alternativeName>
        <fullName evidence="1">Phosphoribosylglycinamide formyltransferase 2</fullName>
    </alternativeName>
</protein>
<dbReference type="EC" id="6.3.1.21" evidence="1"/>
<dbReference type="EMBL" id="CP000527">
    <property type="protein sequence ID" value="ABM29262.1"/>
    <property type="molecule type" value="Genomic_DNA"/>
</dbReference>
<dbReference type="RefSeq" id="WP_010938024.1">
    <property type="nucleotide sequence ID" value="NC_008751.1"/>
</dbReference>
<dbReference type="SMR" id="A1VFP6"/>
<dbReference type="KEGG" id="dvl:Dvul_2246"/>
<dbReference type="HOGENOM" id="CLU_011534_1_3_7"/>
<dbReference type="UniPathway" id="UPA00074">
    <property type="reaction ID" value="UER00127"/>
</dbReference>
<dbReference type="Proteomes" id="UP000009173">
    <property type="component" value="Chromosome"/>
</dbReference>
<dbReference type="GO" id="GO:0005829">
    <property type="term" value="C:cytosol"/>
    <property type="evidence" value="ECO:0007669"/>
    <property type="project" value="TreeGrafter"/>
</dbReference>
<dbReference type="GO" id="GO:0005524">
    <property type="term" value="F:ATP binding"/>
    <property type="evidence" value="ECO:0007669"/>
    <property type="project" value="UniProtKB-UniRule"/>
</dbReference>
<dbReference type="GO" id="GO:0000287">
    <property type="term" value="F:magnesium ion binding"/>
    <property type="evidence" value="ECO:0007669"/>
    <property type="project" value="InterPro"/>
</dbReference>
<dbReference type="GO" id="GO:0043815">
    <property type="term" value="F:phosphoribosylglycinamide formyltransferase 2 activity"/>
    <property type="evidence" value="ECO:0007669"/>
    <property type="project" value="UniProtKB-UniRule"/>
</dbReference>
<dbReference type="GO" id="GO:0004644">
    <property type="term" value="F:phosphoribosylglycinamide formyltransferase activity"/>
    <property type="evidence" value="ECO:0007669"/>
    <property type="project" value="InterPro"/>
</dbReference>
<dbReference type="GO" id="GO:0006189">
    <property type="term" value="P:'de novo' IMP biosynthetic process"/>
    <property type="evidence" value="ECO:0007669"/>
    <property type="project" value="UniProtKB-UniRule"/>
</dbReference>
<dbReference type="FunFam" id="3.30.1490.20:FF:000013">
    <property type="entry name" value="Formate-dependent phosphoribosylglycinamide formyltransferase"/>
    <property type="match status" value="1"/>
</dbReference>
<dbReference type="FunFam" id="3.30.470.20:FF:000027">
    <property type="entry name" value="Formate-dependent phosphoribosylglycinamide formyltransferase"/>
    <property type="match status" value="1"/>
</dbReference>
<dbReference type="FunFam" id="3.40.50.20:FF:000007">
    <property type="entry name" value="Formate-dependent phosphoribosylglycinamide formyltransferase"/>
    <property type="match status" value="1"/>
</dbReference>
<dbReference type="Gene3D" id="3.40.50.20">
    <property type="match status" value="1"/>
</dbReference>
<dbReference type="Gene3D" id="3.30.1490.20">
    <property type="entry name" value="ATP-grasp fold, A domain"/>
    <property type="match status" value="1"/>
</dbReference>
<dbReference type="Gene3D" id="3.30.470.20">
    <property type="entry name" value="ATP-grasp fold, B domain"/>
    <property type="match status" value="1"/>
</dbReference>
<dbReference type="HAMAP" id="MF_01643">
    <property type="entry name" value="PurT"/>
    <property type="match status" value="1"/>
</dbReference>
<dbReference type="InterPro" id="IPR011761">
    <property type="entry name" value="ATP-grasp"/>
</dbReference>
<dbReference type="InterPro" id="IPR003135">
    <property type="entry name" value="ATP-grasp_carboxylate-amine"/>
</dbReference>
<dbReference type="InterPro" id="IPR013815">
    <property type="entry name" value="ATP_grasp_subdomain_1"/>
</dbReference>
<dbReference type="InterPro" id="IPR016185">
    <property type="entry name" value="PreATP-grasp_dom_sf"/>
</dbReference>
<dbReference type="InterPro" id="IPR005862">
    <property type="entry name" value="PurT"/>
</dbReference>
<dbReference type="InterPro" id="IPR054350">
    <property type="entry name" value="PurT/PurK_preATP-grasp"/>
</dbReference>
<dbReference type="InterPro" id="IPR048740">
    <property type="entry name" value="PurT_C"/>
</dbReference>
<dbReference type="InterPro" id="IPR011054">
    <property type="entry name" value="Rudment_hybrid_motif"/>
</dbReference>
<dbReference type="NCBIfam" id="NF006766">
    <property type="entry name" value="PRK09288.1"/>
    <property type="match status" value="1"/>
</dbReference>
<dbReference type="NCBIfam" id="TIGR01142">
    <property type="entry name" value="purT"/>
    <property type="match status" value="1"/>
</dbReference>
<dbReference type="PANTHER" id="PTHR43055">
    <property type="entry name" value="FORMATE-DEPENDENT PHOSPHORIBOSYLGLYCINAMIDE FORMYLTRANSFERASE"/>
    <property type="match status" value="1"/>
</dbReference>
<dbReference type="PANTHER" id="PTHR43055:SF1">
    <property type="entry name" value="FORMATE-DEPENDENT PHOSPHORIBOSYLGLYCINAMIDE FORMYLTRANSFERASE"/>
    <property type="match status" value="1"/>
</dbReference>
<dbReference type="Pfam" id="PF02222">
    <property type="entry name" value="ATP-grasp"/>
    <property type="match status" value="1"/>
</dbReference>
<dbReference type="Pfam" id="PF21244">
    <property type="entry name" value="PurT_C"/>
    <property type="match status" value="1"/>
</dbReference>
<dbReference type="Pfam" id="PF22660">
    <property type="entry name" value="RS_preATP-grasp-like"/>
    <property type="match status" value="1"/>
</dbReference>
<dbReference type="SUPFAM" id="SSF56059">
    <property type="entry name" value="Glutathione synthetase ATP-binding domain-like"/>
    <property type="match status" value="1"/>
</dbReference>
<dbReference type="SUPFAM" id="SSF52440">
    <property type="entry name" value="PreATP-grasp domain"/>
    <property type="match status" value="1"/>
</dbReference>
<dbReference type="SUPFAM" id="SSF51246">
    <property type="entry name" value="Rudiment single hybrid motif"/>
    <property type="match status" value="1"/>
</dbReference>
<dbReference type="PROSITE" id="PS50975">
    <property type="entry name" value="ATP_GRASP"/>
    <property type="match status" value="1"/>
</dbReference>
<comment type="function">
    <text evidence="1">Involved in the de novo purine biosynthesis. Catalyzes the transfer of formate to 5-phospho-ribosyl-glycinamide (GAR), producing 5-phospho-ribosyl-N-formylglycinamide (FGAR). Formate is provided by PurU via hydrolysis of 10-formyl-tetrahydrofolate.</text>
</comment>
<comment type="catalytic activity">
    <reaction evidence="1">
        <text>N(1)-(5-phospho-beta-D-ribosyl)glycinamide + formate + ATP = N(2)-formyl-N(1)-(5-phospho-beta-D-ribosyl)glycinamide + ADP + phosphate + H(+)</text>
        <dbReference type="Rhea" id="RHEA:24829"/>
        <dbReference type="ChEBI" id="CHEBI:15378"/>
        <dbReference type="ChEBI" id="CHEBI:15740"/>
        <dbReference type="ChEBI" id="CHEBI:30616"/>
        <dbReference type="ChEBI" id="CHEBI:43474"/>
        <dbReference type="ChEBI" id="CHEBI:143788"/>
        <dbReference type="ChEBI" id="CHEBI:147286"/>
        <dbReference type="ChEBI" id="CHEBI:456216"/>
        <dbReference type="EC" id="6.3.1.21"/>
    </reaction>
    <physiologicalReaction direction="left-to-right" evidence="1">
        <dbReference type="Rhea" id="RHEA:24830"/>
    </physiologicalReaction>
</comment>
<comment type="pathway">
    <text evidence="1">Purine metabolism; IMP biosynthesis via de novo pathway; N(2)-formyl-N(1)-(5-phospho-D-ribosyl)glycinamide from N(1)-(5-phospho-D-ribosyl)glycinamide (formate route): step 1/1.</text>
</comment>
<comment type="subunit">
    <text evidence="1">Homodimer.</text>
</comment>
<comment type="similarity">
    <text evidence="1">Belongs to the PurK/PurT family.</text>
</comment>
<reference key="1">
    <citation type="journal article" date="2009" name="Environ. Microbiol.">
        <title>Contribution of mobile genetic elements to Desulfovibrio vulgaris genome plasticity.</title>
        <authorList>
            <person name="Walker C.B."/>
            <person name="Stolyar S."/>
            <person name="Chivian D."/>
            <person name="Pinel N."/>
            <person name="Gabster J.A."/>
            <person name="Dehal P.S."/>
            <person name="He Z."/>
            <person name="Yang Z.K."/>
            <person name="Yen H.C."/>
            <person name="Zhou J."/>
            <person name="Wall J.D."/>
            <person name="Hazen T.C."/>
            <person name="Arkin A.P."/>
            <person name="Stahl D.A."/>
        </authorList>
    </citation>
    <scope>NUCLEOTIDE SEQUENCE [LARGE SCALE GENOMIC DNA]</scope>
    <source>
        <strain>DP4</strain>
    </source>
</reference>
<evidence type="ECO:0000255" key="1">
    <source>
        <dbReference type="HAMAP-Rule" id="MF_01643"/>
    </source>
</evidence>
<sequence>MASIGTPLTPTATRILLLGSGELGREVALEAMRLGVEVVAVDRYPNAPAMQVAHRSHVVSMLDGAALRAIIEAEKPYCIVPEIEAIATGTLLELEQEGYRVVPTARAARLTMDREGIRRLAAEELGLPTSPYRFASTEEEYRAAIETVGLPCVVKPVMSSSGKGQSLVRTPADIDSAWAYAQTGGRAGAGRVIVEGFVDFDYEITLLTVRHAGGVTFCDPIGHLQKDGDYRESWQPQPMDAVALEKARAMADAVTGALGGWGIFGVELFVRGDEVWFSEVSPRPHDTGLVTLISQNMSEFALHVRAILGLPVPLLRQNGPAASCVILAEGDSEAPRFHGVDAALAEQDTALCLFGKPEVHGRRRMGVALALGDDIDAARAKARRAAGSVTVEL</sequence>
<keyword id="KW-0067">ATP-binding</keyword>
<keyword id="KW-0436">Ligase</keyword>
<keyword id="KW-0460">Magnesium</keyword>
<keyword id="KW-0479">Metal-binding</keyword>
<keyword id="KW-0547">Nucleotide-binding</keyword>
<keyword id="KW-0658">Purine biosynthesis</keyword>